<sequence length="114" mass="12534">MSKKMFGEIMRQAQKIQEEIQKKQEEVKKMTVEATSGGGMVTVQANGAGEIVSIKIDREVVNPDDIEMLEDLVLAAVNEAIKRAHELAQSEMAKVSMPFNLPGMPDLSSLFGKL</sequence>
<keyword id="KW-0963">Cytoplasm</keyword>
<keyword id="KW-0238">DNA-binding</keyword>
<keyword id="KW-1185">Reference proteome</keyword>
<protein>
    <recommendedName>
        <fullName evidence="1">Nucleoid-associated protein THEYE_A1069</fullName>
    </recommendedName>
</protein>
<name>Y1069_THEYD</name>
<dbReference type="EMBL" id="CP001147">
    <property type="protein sequence ID" value="ACI22116.1"/>
    <property type="molecule type" value="Genomic_DNA"/>
</dbReference>
<dbReference type="RefSeq" id="WP_012546807.1">
    <property type="nucleotide sequence ID" value="NC_011296.1"/>
</dbReference>
<dbReference type="RefSeq" id="YP_002248895.1">
    <property type="nucleotide sequence ID" value="NC_011296.1"/>
</dbReference>
<dbReference type="SMR" id="B5YKY0"/>
<dbReference type="FunCoup" id="B5YKY0">
    <property type="interactions" value="341"/>
</dbReference>
<dbReference type="STRING" id="289376.THEYE_A1069"/>
<dbReference type="EnsemblBacteria" id="ACI22116">
    <property type="protein sequence ID" value="ACI22116"/>
    <property type="gene ID" value="THEYE_A1069"/>
</dbReference>
<dbReference type="KEGG" id="tye:THEYE_A1069"/>
<dbReference type="PATRIC" id="fig|289376.4.peg.1047"/>
<dbReference type="eggNOG" id="COG0718">
    <property type="taxonomic scope" value="Bacteria"/>
</dbReference>
<dbReference type="HOGENOM" id="CLU_140930_2_2_0"/>
<dbReference type="InParanoid" id="B5YKY0"/>
<dbReference type="OrthoDB" id="9803080at2"/>
<dbReference type="Proteomes" id="UP000000718">
    <property type="component" value="Chromosome"/>
</dbReference>
<dbReference type="GO" id="GO:0043590">
    <property type="term" value="C:bacterial nucleoid"/>
    <property type="evidence" value="ECO:0007669"/>
    <property type="project" value="UniProtKB-UniRule"/>
</dbReference>
<dbReference type="GO" id="GO:0005829">
    <property type="term" value="C:cytosol"/>
    <property type="evidence" value="ECO:0000318"/>
    <property type="project" value="GO_Central"/>
</dbReference>
<dbReference type="GO" id="GO:0003677">
    <property type="term" value="F:DNA binding"/>
    <property type="evidence" value="ECO:0000318"/>
    <property type="project" value="GO_Central"/>
</dbReference>
<dbReference type="FunFam" id="3.30.1310.10:FF:000002">
    <property type="entry name" value="Nucleoid-associated protein IKC_06587"/>
    <property type="match status" value="1"/>
</dbReference>
<dbReference type="Gene3D" id="3.30.1310.10">
    <property type="entry name" value="Nucleoid-associated protein YbaB-like domain"/>
    <property type="match status" value="1"/>
</dbReference>
<dbReference type="HAMAP" id="MF_00274">
    <property type="entry name" value="DNA_YbaB_EbfC"/>
    <property type="match status" value="1"/>
</dbReference>
<dbReference type="InterPro" id="IPR036894">
    <property type="entry name" value="YbaB-like_sf"/>
</dbReference>
<dbReference type="InterPro" id="IPR004401">
    <property type="entry name" value="YbaB/EbfC"/>
</dbReference>
<dbReference type="NCBIfam" id="TIGR00103">
    <property type="entry name" value="DNA_YbaB_EbfC"/>
    <property type="match status" value="1"/>
</dbReference>
<dbReference type="PANTHER" id="PTHR33449">
    <property type="entry name" value="NUCLEOID-ASSOCIATED PROTEIN YBAB"/>
    <property type="match status" value="1"/>
</dbReference>
<dbReference type="PANTHER" id="PTHR33449:SF1">
    <property type="entry name" value="NUCLEOID-ASSOCIATED PROTEIN YBAB"/>
    <property type="match status" value="1"/>
</dbReference>
<dbReference type="Pfam" id="PF02575">
    <property type="entry name" value="YbaB_DNA_bd"/>
    <property type="match status" value="1"/>
</dbReference>
<dbReference type="PIRSF" id="PIRSF004555">
    <property type="entry name" value="UCP004555"/>
    <property type="match status" value="1"/>
</dbReference>
<dbReference type="SUPFAM" id="SSF82607">
    <property type="entry name" value="YbaB-like"/>
    <property type="match status" value="1"/>
</dbReference>
<accession>B5YKY0</accession>
<gene>
    <name type="ordered locus">THEYE_A1069</name>
</gene>
<comment type="function">
    <text evidence="1">Binds to DNA and alters its conformation. May be involved in regulation of gene expression, nucleoid organization and DNA protection.</text>
</comment>
<comment type="subunit">
    <text evidence="1">Homodimer.</text>
</comment>
<comment type="subcellular location">
    <subcellularLocation>
        <location evidence="1">Cytoplasm</location>
        <location evidence="1">Nucleoid</location>
    </subcellularLocation>
</comment>
<comment type="similarity">
    <text evidence="1">Belongs to the YbaB/EbfC family.</text>
</comment>
<feature type="chain" id="PRO_1000114660" description="Nucleoid-associated protein THEYE_A1069">
    <location>
        <begin position="1"/>
        <end position="114"/>
    </location>
</feature>
<proteinExistence type="inferred from homology"/>
<reference key="1">
    <citation type="submission" date="2008-08" db="EMBL/GenBank/DDBJ databases">
        <title>The complete genome sequence of Thermodesulfovibrio yellowstonii strain ATCC 51303 / DSM 11347 / YP87.</title>
        <authorList>
            <person name="Dodson R.J."/>
            <person name="Durkin A.S."/>
            <person name="Wu M."/>
            <person name="Eisen J."/>
            <person name="Sutton G."/>
        </authorList>
    </citation>
    <scope>NUCLEOTIDE SEQUENCE [LARGE SCALE GENOMIC DNA]</scope>
    <source>
        <strain>ATCC 51303 / DSM 11347 / YP87</strain>
    </source>
</reference>
<organism>
    <name type="scientific">Thermodesulfovibrio yellowstonii (strain ATCC 51303 / DSM 11347 / YP87)</name>
    <dbReference type="NCBI Taxonomy" id="289376"/>
    <lineage>
        <taxon>Bacteria</taxon>
        <taxon>Pseudomonadati</taxon>
        <taxon>Nitrospirota</taxon>
        <taxon>Thermodesulfovibrionia</taxon>
        <taxon>Thermodesulfovibrionales</taxon>
        <taxon>Thermodesulfovibrionaceae</taxon>
        <taxon>Thermodesulfovibrio</taxon>
    </lineage>
</organism>
<evidence type="ECO:0000255" key="1">
    <source>
        <dbReference type="HAMAP-Rule" id="MF_00274"/>
    </source>
</evidence>